<name>RS8_PYRAR</name>
<sequence length="130" mass="14898">MVMLDILSNALIQIKNAEVMGKRQVTIWPVNKLTYYTLRVLQRYGYVGEIEYVDDGRGGKYIVQLLGKINDIGPIRPRYPVKYREIVQWEQKFLPARQIGILVISTSQGVVSHIEAKEKKIGGVLLAYVY</sequence>
<proteinExistence type="inferred from homology"/>
<evidence type="ECO:0000255" key="1">
    <source>
        <dbReference type="HAMAP-Rule" id="MF_01302"/>
    </source>
</evidence>
<evidence type="ECO:0000305" key="2"/>
<accession>A4WMD9</accession>
<organism>
    <name type="scientific">Pyrobaculum arsenaticum (strain DSM 13514 / JCM 11321 / PZ6)</name>
    <dbReference type="NCBI Taxonomy" id="340102"/>
    <lineage>
        <taxon>Archaea</taxon>
        <taxon>Thermoproteota</taxon>
        <taxon>Thermoprotei</taxon>
        <taxon>Thermoproteales</taxon>
        <taxon>Thermoproteaceae</taxon>
        <taxon>Pyrobaculum</taxon>
    </lineage>
</organism>
<protein>
    <recommendedName>
        <fullName evidence="1">Small ribosomal subunit protein uS8</fullName>
    </recommendedName>
    <alternativeName>
        <fullName evidence="2">30S ribosomal protein S8</fullName>
    </alternativeName>
</protein>
<feature type="chain" id="PRO_0000305770" description="Small ribosomal subunit protein uS8">
    <location>
        <begin position="1"/>
        <end position="130"/>
    </location>
</feature>
<gene>
    <name evidence="1" type="primary">rps8</name>
    <name type="ordered locus">Pars_2009</name>
</gene>
<reference key="1">
    <citation type="submission" date="2007-04" db="EMBL/GenBank/DDBJ databases">
        <title>Complete sequence of Pyrobaculum arsenaticum DSM 13514.</title>
        <authorList>
            <consortium name="US DOE Joint Genome Institute"/>
            <person name="Copeland A."/>
            <person name="Lucas S."/>
            <person name="Lapidus A."/>
            <person name="Barry K."/>
            <person name="Glavina del Rio T."/>
            <person name="Dalin E."/>
            <person name="Tice H."/>
            <person name="Pitluck S."/>
            <person name="Chain P."/>
            <person name="Malfatti S."/>
            <person name="Shin M."/>
            <person name="Vergez L."/>
            <person name="Schmutz J."/>
            <person name="Larimer F."/>
            <person name="Land M."/>
            <person name="Hauser L."/>
            <person name="Kyrpides N."/>
            <person name="Mikhailova N."/>
            <person name="Cozen A.E."/>
            <person name="Fitz-Gibbon S.T."/>
            <person name="House C.H."/>
            <person name="Saltikov C."/>
            <person name="Lowe T.M."/>
            <person name="Richardson P."/>
        </authorList>
    </citation>
    <scope>NUCLEOTIDE SEQUENCE [LARGE SCALE GENOMIC DNA]</scope>
    <source>
        <strain>ATCC 700994 / DSM 13514 / JCM 11321 / PZ6</strain>
    </source>
</reference>
<dbReference type="EMBL" id="CP000660">
    <property type="protein sequence ID" value="ABP51556.1"/>
    <property type="molecule type" value="Genomic_DNA"/>
</dbReference>
<dbReference type="SMR" id="A4WMD9"/>
<dbReference type="STRING" id="340102.Pars_2009"/>
<dbReference type="KEGG" id="pas:Pars_2009"/>
<dbReference type="HOGENOM" id="CLU_098428_1_1_2"/>
<dbReference type="OrthoDB" id="5670at2157"/>
<dbReference type="PhylomeDB" id="A4WMD9"/>
<dbReference type="Proteomes" id="UP000001567">
    <property type="component" value="Chromosome"/>
</dbReference>
<dbReference type="GO" id="GO:1990904">
    <property type="term" value="C:ribonucleoprotein complex"/>
    <property type="evidence" value="ECO:0007669"/>
    <property type="project" value="UniProtKB-KW"/>
</dbReference>
<dbReference type="GO" id="GO:0005840">
    <property type="term" value="C:ribosome"/>
    <property type="evidence" value="ECO:0007669"/>
    <property type="project" value="UniProtKB-KW"/>
</dbReference>
<dbReference type="GO" id="GO:0019843">
    <property type="term" value="F:rRNA binding"/>
    <property type="evidence" value="ECO:0007669"/>
    <property type="project" value="UniProtKB-UniRule"/>
</dbReference>
<dbReference type="GO" id="GO:0003735">
    <property type="term" value="F:structural constituent of ribosome"/>
    <property type="evidence" value="ECO:0007669"/>
    <property type="project" value="InterPro"/>
</dbReference>
<dbReference type="GO" id="GO:0006412">
    <property type="term" value="P:translation"/>
    <property type="evidence" value="ECO:0007669"/>
    <property type="project" value="UniProtKB-UniRule"/>
</dbReference>
<dbReference type="FunFam" id="3.30.1370.30:FF:000001">
    <property type="entry name" value="40S ribosomal protein S15a"/>
    <property type="match status" value="1"/>
</dbReference>
<dbReference type="Gene3D" id="3.30.1370.30">
    <property type="match status" value="1"/>
</dbReference>
<dbReference type="Gene3D" id="3.30.1490.10">
    <property type="match status" value="1"/>
</dbReference>
<dbReference type="HAMAP" id="MF_01302_A">
    <property type="entry name" value="Ribosomal_uS8_A"/>
    <property type="match status" value="1"/>
</dbReference>
<dbReference type="InterPro" id="IPR000630">
    <property type="entry name" value="Ribosomal_uS8"/>
</dbReference>
<dbReference type="InterPro" id="IPR047863">
    <property type="entry name" value="Ribosomal_uS8_CS"/>
</dbReference>
<dbReference type="InterPro" id="IPR035987">
    <property type="entry name" value="Ribosomal_uS8_sf"/>
</dbReference>
<dbReference type="NCBIfam" id="NF003115">
    <property type="entry name" value="PRK04034.1"/>
    <property type="match status" value="1"/>
</dbReference>
<dbReference type="PANTHER" id="PTHR11758">
    <property type="entry name" value="40S RIBOSOMAL PROTEIN S15A"/>
    <property type="match status" value="1"/>
</dbReference>
<dbReference type="Pfam" id="PF00410">
    <property type="entry name" value="Ribosomal_S8"/>
    <property type="match status" value="1"/>
</dbReference>
<dbReference type="SUPFAM" id="SSF56047">
    <property type="entry name" value="Ribosomal protein S8"/>
    <property type="match status" value="1"/>
</dbReference>
<dbReference type="PROSITE" id="PS00053">
    <property type="entry name" value="RIBOSOMAL_S8"/>
    <property type="match status" value="1"/>
</dbReference>
<comment type="function">
    <text evidence="1">One of the primary rRNA binding proteins, it binds directly to 16S rRNA central domain where it helps coordinate assembly of the platform of the 30S subunit.</text>
</comment>
<comment type="subunit">
    <text evidence="1">Part of the 30S ribosomal subunit.</text>
</comment>
<comment type="similarity">
    <text evidence="1">Belongs to the universal ribosomal protein uS8 family.</text>
</comment>
<keyword id="KW-0687">Ribonucleoprotein</keyword>
<keyword id="KW-0689">Ribosomal protein</keyword>
<keyword id="KW-0694">RNA-binding</keyword>
<keyword id="KW-0699">rRNA-binding</keyword>